<organism>
    <name type="scientific">Lycaon pictus</name>
    <name type="common">African wild dog</name>
    <name type="synonym">Cape hunting dog</name>
    <dbReference type="NCBI Taxonomy" id="9622"/>
    <lineage>
        <taxon>Eukaryota</taxon>
        <taxon>Metazoa</taxon>
        <taxon>Chordata</taxon>
        <taxon>Craniata</taxon>
        <taxon>Vertebrata</taxon>
        <taxon>Euteleostomi</taxon>
        <taxon>Mammalia</taxon>
        <taxon>Eutheria</taxon>
        <taxon>Laurasiatheria</taxon>
        <taxon>Carnivora</taxon>
        <taxon>Caniformia</taxon>
        <taxon>Canidae</taxon>
        <taxon>Lycaon</taxon>
    </lineage>
</organism>
<protein>
    <recommendedName>
        <fullName>Myoglobin</fullName>
    </recommendedName>
    <alternativeName>
        <fullName evidence="1">Nitrite reductase MB</fullName>
        <ecNumber evidence="1">1.7.-.-</ecNumber>
    </alternativeName>
    <alternativeName>
        <fullName evidence="1">Pseudoperoxidase MB</fullName>
        <ecNumber evidence="1">1.11.1.-</ecNumber>
    </alternativeName>
</protein>
<keyword id="KW-0963">Cytoplasm</keyword>
<keyword id="KW-0903">Direct protein sequencing</keyword>
<keyword id="KW-0349">Heme</keyword>
<keyword id="KW-0408">Iron</keyword>
<keyword id="KW-0479">Metal-binding</keyword>
<keyword id="KW-0514">Muscle protein</keyword>
<keyword id="KW-0560">Oxidoreductase</keyword>
<keyword id="KW-0561">Oxygen transport</keyword>
<keyword id="KW-0597">Phosphoprotein</keyword>
<keyword id="KW-0813">Transport</keyword>
<reference key="1">
    <citation type="journal article" date="1976" name="Biochim. Biophys. Acta">
        <title>The myoglobin of the Cape hunting dog (Lycaon pictus).</title>
        <authorList>
            <person name="Romero-Herrera A.E."/>
            <person name="Darbre P.D."/>
            <person name="Lehmann H."/>
        </authorList>
    </citation>
    <scope>PROTEIN SEQUENCE OF 2-154</scope>
</reference>
<evidence type="ECO:0000250" key="1">
    <source>
        <dbReference type="UniProtKB" id="P02144"/>
    </source>
</evidence>
<evidence type="ECO:0000250" key="2">
    <source>
        <dbReference type="UniProtKB" id="P02185"/>
    </source>
</evidence>
<evidence type="ECO:0000250" key="3">
    <source>
        <dbReference type="UniProtKB" id="P02189"/>
    </source>
</evidence>
<evidence type="ECO:0000250" key="4">
    <source>
        <dbReference type="UniProtKB" id="P04247"/>
    </source>
</evidence>
<evidence type="ECO:0000250" key="5">
    <source>
        <dbReference type="UniProtKB" id="P68082"/>
    </source>
</evidence>
<evidence type="ECO:0000250" key="6">
    <source>
        <dbReference type="UniProtKB" id="Q9QZ76"/>
    </source>
</evidence>
<evidence type="ECO:0000255" key="7">
    <source>
        <dbReference type="PROSITE-ProRule" id="PRU00238"/>
    </source>
</evidence>
<evidence type="ECO:0000269" key="8">
    <source>
    </source>
</evidence>
<dbReference type="EC" id="1.7.-.-" evidence="1"/>
<dbReference type="EC" id="1.11.1.-" evidence="1"/>
<dbReference type="PIR" id="A90605">
    <property type="entry name" value="MYDGAH"/>
</dbReference>
<dbReference type="SMR" id="P02159"/>
<dbReference type="GO" id="GO:0070062">
    <property type="term" value="C:extracellular exosome"/>
    <property type="evidence" value="ECO:0007669"/>
    <property type="project" value="TreeGrafter"/>
</dbReference>
<dbReference type="GO" id="GO:0016528">
    <property type="term" value="C:sarcoplasm"/>
    <property type="evidence" value="ECO:0000250"/>
    <property type="project" value="UniProtKB"/>
</dbReference>
<dbReference type="GO" id="GO:0020037">
    <property type="term" value="F:heme binding"/>
    <property type="evidence" value="ECO:0007669"/>
    <property type="project" value="InterPro"/>
</dbReference>
<dbReference type="GO" id="GO:0046872">
    <property type="term" value="F:metal ion binding"/>
    <property type="evidence" value="ECO:0007669"/>
    <property type="project" value="UniProtKB-KW"/>
</dbReference>
<dbReference type="GO" id="GO:0098809">
    <property type="term" value="F:nitrite reductase activity"/>
    <property type="evidence" value="ECO:0000250"/>
    <property type="project" value="UniProtKB"/>
</dbReference>
<dbReference type="GO" id="GO:0019825">
    <property type="term" value="F:oxygen binding"/>
    <property type="evidence" value="ECO:0007669"/>
    <property type="project" value="InterPro"/>
</dbReference>
<dbReference type="GO" id="GO:0005344">
    <property type="term" value="F:oxygen carrier activity"/>
    <property type="evidence" value="ECO:0000250"/>
    <property type="project" value="UniProtKB"/>
</dbReference>
<dbReference type="GO" id="GO:0004601">
    <property type="term" value="F:peroxidase activity"/>
    <property type="evidence" value="ECO:0000250"/>
    <property type="project" value="UniProtKB"/>
</dbReference>
<dbReference type="GO" id="GO:0019430">
    <property type="term" value="P:removal of superoxide radicals"/>
    <property type="evidence" value="ECO:0000250"/>
    <property type="project" value="UniProtKB"/>
</dbReference>
<dbReference type="Gene3D" id="6.10.140.2100">
    <property type="match status" value="1"/>
</dbReference>
<dbReference type="Gene3D" id="6.10.140.2110">
    <property type="match status" value="1"/>
</dbReference>
<dbReference type="InterPro" id="IPR000971">
    <property type="entry name" value="Globin"/>
</dbReference>
<dbReference type="InterPro" id="IPR009050">
    <property type="entry name" value="Globin-like_sf"/>
</dbReference>
<dbReference type="InterPro" id="IPR002335">
    <property type="entry name" value="Myoglobin"/>
</dbReference>
<dbReference type="PANTHER" id="PTHR47132">
    <property type="entry name" value="MYOGLOBIN"/>
    <property type="match status" value="1"/>
</dbReference>
<dbReference type="PANTHER" id="PTHR47132:SF1">
    <property type="entry name" value="MYOGLOBIN"/>
    <property type="match status" value="1"/>
</dbReference>
<dbReference type="Pfam" id="PF00042">
    <property type="entry name" value="Globin"/>
    <property type="match status" value="1"/>
</dbReference>
<dbReference type="PRINTS" id="PR00613">
    <property type="entry name" value="MYOGLOBIN"/>
</dbReference>
<dbReference type="SUPFAM" id="SSF46458">
    <property type="entry name" value="Globin-like"/>
    <property type="match status" value="1"/>
</dbReference>
<dbReference type="PROSITE" id="PS01033">
    <property type="entry name" value="GLOBIN"/>
    <property type="match status" value="1"/>
</dbReference>
<feature type="initiator methionine" description="Removed" evidence="8">
    <location>
        <position position="1"/>
    </location>
</feature>
<feature type="chain" id="PRO_0000053313" description="Myoglobin">
    <location>
        <begin position="2"/>
        <end position="154"/>
    </location>
</feature>
<feature type="domain" description="Globin" evidence="7">
    <location>
        <begin position="2"/>
        <end position="148"/>
    </location>
</feature>
<feature type="binding site" evidence="5">
    <location>
        <position position="65"/>
    </location>
    <ligand>
        <name>nitrite</name>
        <dbReference type="ChEBI" id="CHEBI:16301"/>
    </ligand>
</feature>
<feature type="binding site" evidence="3 7">
    <location>
        <position position="65"/>
    </location>
    <ligand>
        <name>O2</name>
        <dbReference type="ChEBI" id="CHEBI:15379"/>
    </ligand>
</feature>
<feature type="binding site" description="proximal binding residue" evidence="1">
    <location>
        <position position="94"/>
    </location>
    <ligand>
        <name>heme b</name>
        <dbReference type="ChEBI" id="CHEBI:60344"/>
    </ligand>
    <ligandPart>
        <name>Fe</name>
        <dbReference type="ChEBI" id="CHEBI:18248"/>
    </ligandPart>
</feature>
<feature type="modified residue" description="Phosphoserine" evidence="6">
    <location>
        <position position="4"/>
    </location>
</feature>
<feature type="modified residue" description="Phosphothreonine" evidence="4">
    <location>
        <position position="68"/>
    </location>
</feature>
<proteinExistence type="evidence at protein level"/>
<sequence length="154" mass="17364">MGLSDGEWQIVLNIWGKVETDLAGHGQEVLIRLFKNHPETLDKFDKFKHLKTEDEMKGSEDLKKHGNTVLTALGGILKKKGHHEAELKPLAQSHATKHKIPVKYLEFISDAIIQVLQNKHSGDFHADTEAAMKKALELFRNDIAAKYKELGFQG</sequence>
<name>MYG_LYCPI</name>
<gene>
    <name type="primary">MB</name>
</gene>
<comment type="function">
    <text evidence="1">Monomeric heme protein which primary function is to store oxygen and facilitate its diffusion within muscle tissues. Reversibly binds oxygen through a pentacoordinated heme iron and enables its timely and efficient release as needed during periods of heightened demand. Depending on the oxidative conditions of tissues and cells, and in addition to its ability to bind oxygen, it also has a nitrite reductase activity whereby it regulates the production of bioactive nitric oxide. Under stress conditions, like hypoxia and anoxia, it also protects cells against reactive oxygen species thanks to its pseudoperoxidase activity.</text>
</comment>
<comment type="catalytic activity">
    <reaction evidence="1">
        <text>Fe(III)-heme b-[protein] + nitric oxide + H2O = Fe(II)-heme b-[protein] + nitrite + 2 H(+)</text>
        <dbReference type="Rhea" id="RHEA:77711"/>
        <dbReference type="Rhea" id="RHEA-COMP:18975"/>
        <dbReference type="Rhea" id="RHEA-COMP:18976"/>
        <dbReference type="ChEBI" id="CHEBI:15377"/>
        <dbReference type="ChEBI" id="CHEBI:15378"/>
        <dbReference type="ChEBI" id="CHEBI:16301"/>
        <dbReference type="ChEBI" id="CHEBI:16480"/>
        <dbReference type="ChEBI" id="CHEBI:55376"/>
        <dbReference type="ChEBI" id="CHEBI:60344"/>
    </reaction>
    <physiologicalReaction direction="right-to-left" evidence="1">
        <dbReference type="Rhea" id="RHEA:77713"/>
    </physiologicalReaction>
</comment>
<comment type="catalytic activity">
    <reaction evidence="1">
        <text>H2O2 + AH2 = A + 2 H2O</text>
        <dbReference type="Rhea" id="RHEA:30275"/>
        <dbReference type="ChEBI" id="CHEBI:13193"/>
        <dbReference type="ChEBI" id="CHEBI:15377"/>
        <dbReference type="ChEBI" id="CHEBI:16240"/>
        <dbReference type="ChEBI" id="CHEBI:17499"/>
    </reaction>
</comment>
<comment type="subunit">
    <text evidence="2">Monomeric.</text>
</comment>
<comment type="subcellular location">
    <subcellularLocation>
        <location evidence="1">Cytoplasm</location>
        <location evidence="1">Sarcoplasm</location>
    </subcellularLocation>
</comment>
<comment type="similarity">
    <text evidence="7">Belongs to the globin family.</text>
</comment>
<accession>P02159</accession>